<keyword id="KW-0963">Cytoplasm</keyword>
<keyword id="KW-0444">Lipid biosynthesis</keyword>
<keyword id="KW-0443">Lipid metabolism</keyword>
<keyword id="KW-0520">NAD</keyword>
<keyword id="KW-0521">NADP</keyword>
<keyword id="KW-0547">Nucleotide-binding</keyword>
<keyword id="KW-0560">Oxidoreductase</keyword>
<keyword id="KW-0594">Phospholipid biosynthesis</keyword>
<keyword id="KW-1208">Phospholipid metabolism</keyword>
<gene>
    <name evidence="1" type="primary">gpsA</name>
    <name type="ordered locus">SPP_2146</name>
</gene>
<comment type="function">
    <text evidence="1">Catalyzes the reduction of the glycolytic intermediate dihydroxyacetone phosphate (DHAP) to sn-glycerol 3-phosphate (G3P), the key precursor for phospholipid synthesis.</text>
</comment>
<comment type="catalytic activity">
    <reaction evidence="1">
        <text>sn-glycerol 3-phosphate + NAD(+) = dihydroxyacetone phosphate + NADH + H(+)</text>
        <dbReference type="Rhea" id="RHEA:11092"/>
        <dbReference type="ChEBI" id="CHEBI:15378"/>
        <dbReference type="ChEBI" id="CHEBI:57540"/>
        <dbReference type="ChEBI" id="CHEBI:57597"/>
        <dbReference type="ChEBI" id="CHEBI:57642"/>
        <dbReference type="ChEBI" id="CHEBI:57945"/>
        <dbReference type="EC" id="1.1.1.94"/>
    </reaction>
    <physiologicalReaction direction="right-to-left" evidence="1">
        <dbReference type="Rhea" id="RHEA:11094"/>
    </physiologicalReaction>
</comment>
<comment type="catalytic activity">
    <reaction evidence="1">
        <text>sn-glycerol 3-phosphate + NADP(+) = dihydroxyacetone phosphate + NADPH + H(+)</text>
        <dbReference type="Rhea" id="RHEA:11096"/>
        <dbReference type="ChEBI" id="CHEBI:15378"/>
        <dbReference type="ChEBI" id="CHEBI:57597"/>
        <dbReference type="ChEBI" id="CHEBI:57642"/>
        <dbReference type="ChEBI" id="CHEBI:57783"/>
        <dbReference type="ChEBI" id="CHEBI:58349"/>
        <dbReference type="EC" id="1.1.1.94"/>
    </reaction>
    <physiologicalReaction direction="right-to-left" evidence="1">
        <dbReference type="Rhea" id="RHEA:11098"/>
    </physiologicalReaction>
</comment>
<comment type="pathway">
    <text evidence="1">Membrane lipid metabolism; glycerophospholipid metabolism.</text>
</comment>
<comment type="subcellular location">
    <subcellularLocation>
        <location evidence="1">Cytoplasm</location>
    </subcellularLocation>
</comment>
<comment type="similarity">
    <text evidence="1">Belongs to the NAD-dependent glycerol-3-phosphate dehydrogenase family.</text>
</comment>
<protein>
    <recommendedName>
        <fullName evidence="1">Glycerol-3-phosphate dehydrogenase [NAD(P)+]</fullName>
        <ecNumber evidence="1">1.1.1.94</ecNumber>
    </recommendedName>
    <alternativeName>
        <fullName evidence="1">NAD(P)(+)-dependent glycerol-3-phosphate dehydrogenase</fullName>
    </alternativeName>
    <alternativeName>
        <fullName evidence="1">NAD(P)H-dependent dihydroxyacetone-phosphate reductase</fullName>
    </alternativeName>
</protein>
<name>GPDA_STRZP</name>
<evidence type="ECO:0000255" key="1">
    <source>
        <dbReference type="HAMAP-Rule" id="MF_00394"/>
    </source>
</evidence>
<sequence length="338" mass="36767">MEKQTVAVLGPGSWGTALSQVLNDNGHEVRIWGNLPEQINEINTYHTNKHYFKDVVLDENIIAYTDLAETLKDVDAILFVVPTKVTRLVAQQVAQTLDHKAIIMHASKGLEPDSHKRLSTILEEEIPEQLRSDIVVVSGPSHAEETIVRDLTLITAASKDLQTAQYVQELFSNHYFRLYTNTDVIGVETAGALKNIIAVGAGALHGLGFGDNAKAAIIARGLAEITRLGVALGASPLTYSGLSGVGDLIVTGTSIHSRNWRAGDALGRGESLADIEANMGMVIEGISTTRAAYELAQELGVYMPITQAIYQVIYHGTNIKDAIYDIMNNEFKAENEWS</sequence>
<feature type="chain" id="PRO_1000190176" description="Glycerol-3-phosphate dehydrogenase [NAD(P)+]">
    <location>
        <begin position="1"/>
        <end position="338"/>
    </location>
</feature>
<feature type="active site" description="Proton acceptor" evidence="1">
    <location>
        <position position="194"/>
    </location>
</feature>
<feature type="binding site" evidence="1">
    <location>
        <position position="13"/>
    </location>
    <ligand>
        <name>NADPH</name>
        <dbReference type="ChEBI" id="CHEBI:57783"/>
    </ligand>
</feature>
<feature type="binding site" evidence="1">
    <location>
        <position position="14"/>
    </location>
    <ligand>
        <name>NADPH</name>
        <dbReference type="ChEBI" id="CHEBI:57783"/>
    </ligand>
</feature>
<feature type="binding site" evidence="1">
    <location>
        <position position="108"/>
    </location>
    <ligand>
        <name>NADPH</name>
        <dbReference type="ChEBI" id="CHEBI:57783"/>
    </ligand>
</feature>
<feature type="binding site" evidence="1">
    <location>
        <position position="108"/>
    </location>
    <ligand>
        <name>sn-glycerol 3-phosphate</name>
        <dbReference type="ChEBI" id="CHEBI:57597"/>
    </ligand>
</feature>
<feature type="binding site" evidence="1">
    <location>
        <position position="139"/>
    </location>
    <ligand>
        <name>sn-glycerol 3-phosphate</name>
        <dbReference type="ChEBI" id="CHEBI:57597"/>
    </ligand>
</feature>
<feature type="binding site" evidence="1">
    <location>
        <position position="141"/>
    </location>
    <ligand>
        <name>sn-glycerol 3-phosphate</name>
        <dbReference type="ChEBI" id="CHEBI:57597"/>
    </ligand>
</feature>
<feature type="binding site" evidence="1">
    <location>
        <position position="143"/>
    </location>
    <ligand>
        <name>NADPH</name>
        <dbReference type="ChEBI" id="CHEBI:57783"/>
    </ligand>
</feature>
<feature type="binding site" evidence="1">
    <location>
        <position position="194"/>
    </location>
    <ligand>
        <name>sn-glycerol 3-phosphate</name>
        <dbReference type="ChEBI" id="CHEBI:57597"/>
    </ligand>
</feature>
<feature type="binding site" evidence="1">
    <location>
        <position position="247"/>
    </location>
    <ligand>
        <name>sn-glycerol 3-phosphate</name>
        <dbReference type="ChEBI" id="CHEBI:57597"/>
    </ligand>
</feature>
<feature type="binding site" evidence="1">
    <location>
        <position position="257"/>
    </location>
    <ligand>
        <name>sn-glycerol 3-phosphate</name>
        <dbReference type="ChEBI" id="CHEBI:57597"/>
    </ligand>
</feature>
<feature type="binding site" evidence="1">
    <location>
        <position position="258"/>
    </location>
    <ligand>
        <name>NADPH</name>
        <dbReference type="ChEBI" id="CHEBI:57783"/>
    </ligand>
</feature>
<feature type="binding site" evidence="1">
    <location>
        <position position="258"/>
    </location>
    <ligand>
        <name>sn-glycerol 3-phosphate</name>
        <dbReference type="ChEBI" id="CHEBI:57597"/>
    </ligand>
</feature>
<feature type="binding site" evidence="1">
    <location>
        <position position="259"/>
    </location>
    <ligand>
        <name>sn-glycerol 3-phosphate</name>
        <dbReference type="ChEBI" id="CHEBI:57597"/>
    </ligand>
</feature>
<feature type="binding site" evidence="1">
    <location>
        <position position="282"/>
    </location>
    <ligand>
        <name>NADPH</name>
        <dbReference type="ChEBI" id="CHEBI:57783"/>
    </ligand>
</feature>
<feature type="binding site" evidence="1">
    <location>
        <position position="284"/>
    </location>
    <ligand>
        <name>NADPH</name>
        <dbReference type="ChEBI" id="CHEBI:57783"/>
    </ligand>
</feature>
<reference key="1">
    <citation type="journal article" date="2010" name="Genome Biol.">
        <title>Structure and dynamics of the pan-genome of Streptococcus pneumoniae and closely related species.</title>
        <authorList>
            <person name="Donati C."/>
            <person name="Hiller N.L."/>
            <person name="Tettelin H."/>
            <person name="Muzzi A."/>
            <person name="Croucher N.J."/>
            <person name="Angiuoli S.V."/>
            <person name="Oggioni M."/>
            <person name="Dunning Hotopp J.C."/>
            <person name="Hu F.Z."/>
            <person name="Riley D.R."/>
            <person name="Covacci A."/>
            <person name="Mitchell T.J."/>
            <person name="Bentley S.D."/>
            <person name="Kilian M."/>
            <person name="Ehrlich G.D."/>
            <person name="Rappuoli R."/>
            <person name="Moxon E.R."/>
            <person name="Masignani V."/>
        </authorList>
    </citation>
    <scope>NUCLEOTIDE SEQUENCE [LARGE SCALE GENOMIC DNA]</scope>
    <source>
        <strain>P1031</strain>
    </source>
</reference>
<accession>C1CN37</accession>
<proteinExistence type="inferred from homology"/>
<organism>
    <name type="scientific">Streptococcus pneumoniae (strain P1031)</name>
    <dbReference type="NCBI Taxonomy" id="488223"/>
    <lineage>
        <taxon>Bacteria</taxon>
        <taxon>Bacillati</taxon>
        <taxon>Bacillota</taxon>
        <taxon>Bacilli</taxon>
        <taxon>Lactobacillales</taxon>
        <taxon>Streptococcaceae</taxon>
        <taxon>Streptococcus</taxon>
    </lineage>
</organism>
<dbReference type="EC" id="1.1.1.94" evidence="1"/>
<dbReference type="EMBL" id="CP000920">
    <property type="protein sequence ID" value="ACO20820.1"/>
    <property type="molecule type" value="Genomic_DNA"/>
</dbReference>
<dbReference type="RefSeq" id="WP_000415116.1">
    <property type="nucleotide sequence ID" value="NC_012467.1"/>
</dbReference>
<dbReference type="SMR" id="C1CN37"/>
<dbReference type="KEGG" id="spp:SPP_2146"/>
<dbReference type="HOGENOM" id="CLU_033449_0_2_9"/>
<dbReference type="UniPathway" id="UPA00940"/>
<dbReference type="GO" id="GO:0005829">
    <property type="term" value="C:cytosol"/>
    <property type="evidence" value="ECO:0007669"/>
    <property type="project" value="TreeGrafter"/>
</dbReference>
<dbReference type="GO" id="GO:0047952">
    <property type="term" value="F:glycerol-3-phosphate dehydrogenase [NAD(P)+] activity"/>
    <property type="evidence" value="ECO:0007669"/>
    <property type="project" value="UniProtKB-UniRule"/>
</dbReference>
<dbReference type="GO" id="GO:0051287">
    <property type="term" value="F:NAD binding"/>
    <property type="evidence" value="ECO:0007669"/>
    <property type="project" value="InterPro"/>
</dbReference>
<dbReference type="GO" id="GO:0005975">
    <property type="term" value="P:carbohydrate metabolic process"/>
    <property type="evidence" value="ECO:0007669"/>
    <property type="project" value="InterPro"/>
</dbReference>
<dbReference type="GO" id="GO:0046167">
    <property type="term" value="P:glycerol-3-phosphate biosynthetic process"/>
    <property type="evidence" value="ECO:0007669"/>
    <property type="project" value="UniProtKB-UniRule"/>
</dbReference>
<dbReference type="GO" id="GO:0046168">
    <property type="term" value="P:glycerol-3-phosphate catabolic process"/>
    <property type="evidence" value="ECO:0007669"/>
    <property type="project" value="InterPro"/>
</dbReference>
<dbReference type="GO" id="GO:0006650">
    <property type="term" value="P:glycerophospholipid metabolic process"/>
    <property type="evidence" value="ECO:0007669"/>
    <property type="project" value="UniProtKB-UniRule"/>
</dbReference>
<dbReference type="GO" id="GO:0008654">
    <property type="term" value="P:phospholipid biosynthetic process"/>
    <property type="evidence" value="ECO:0007669"/>
    <property type="project" value="UniProtKB-KW"/>
</dbReference>
<dbReference type="FunFam" id="1.10.1040.10:FF:000001">
    <property type="entry name" value="Glycerol-3-phosphate dehydrogenase [NAD(P)+]"/>
    <property type="match status" value="1"/>
</dbReference>
<dbReference type="FunFam" id="3.40.50.720:FF:000019">
    <property type="entry name" value="Glycerol-3-phosphate dehydrogenase [NAD(P)+]"/>
    <property type="match status" value="1"/>
</dbReference>
<dbReference type="Gene3D" id="1.10.1040.10">
    <property type="entry name" value="N-(1-d-carboxylethyl)-l-norvaline Dehydrogenase, domain 2"/>
    <property type="match status" value="1"/>
</dbReference>
<dbReference type="Gene3D" id="3.40.50.720">
    <property type="entry name" value="NAD(P)-binding Rossmann-like Domain"/>
    <property type="match status" value="1"/>
</dbReference>
<dbReference type="HAMAP" id="MF_00394">
    <property type="entry name" value="NAD_Glyc3P_dehydrog"/>
    <property type="match status" value="1"/>
</dbReference>
<dbReference type="InterPro" id="IPR008927">
    <property type="entry name" value="6-PGluconate_DH-like_C_sf"/>
</dbReference>
<dbReference type="InterPro" id="IPR013328">
    <property type="entry name" value="6PGD_dom2"/>
</dbReference>
<dbReference type="InterPro" id="IPR006168">
    <property type="entry name" value="G3P_DH_NAD-dep"/>
</dbReference>
<dbReference type="InterPro" id="IPR006109">
    <property type="entry name" value="G3P_DH_NAD-dep_C"/>
</dbReference>
<dbReference type="InterPro" id="IPR011128">
    <property type="entry name" value="G3P_DH_NAD-dep_N"/>
</dbReference>
<dbReference type="InterPro" id="IPR036291">
    <property type="entry name" value="NAD(P)-bd_dom_sf"/>
</dbReference>
<dbReference type="NCBIfam" id="NF000940">
    <property type="entry name" value="PRK00094.1-2"/>
    <property type="match status" value="1"/>
</dbReference>
<dbReference type="NCBIfam" id="NF000941">
    <property type="entry name" value="PRK00094.1-3"/>
    <property type="match status" value="1"/>
</dbReference>
<dbReference type="NCBIfam" id="NF000942">
    <property type="entry name" value="PRK00094.1-4"/>
    <property type="match status" value="1"/>
</dbReference>
<dbReference type="PANTHER" id="PTHR11728">
    <property type="entry name" value="GLYCEROL-3-PHOSPHATE DEHYDROGENASE"/>
    <property type="match status" value="1"/>
</dbReference>
<dbReference type="PANTHER" id="PTHR11728:SF1">
    <property type="entry name" value="GLYCEROL-3-PHOSPHATE DEHYDROGENASE [NAD(+)] 2, CHLOROPLASTIC"/>
    <property type="match status" value="1"/>
</dbReference>
<dbReference type="Pfam" id="PF07479">
    <property type="entry name" value="NAD_Gly3P_dh_C"/>
    <property type="match status" value="1"/>
</dbReference>
<dbReference type="Pfam" id="PF01210">
    <property type="entry name" value="NAD_Gly3P_dh_N"/>
    <property type="match status" value="1"/>
</dbReference>
<dbReference type="PIRSF" id="PIRSF000114">
    <property type="entry name" value="Glycerol-3-P_dh"/>
    <property type="match status" value="1"/>
</dbReference>
<dbReference type="PRINTS" id="PR00077">
    <property type="entry name" value="GPDHDRGNASE"/>
</dbReference>
<dbReference type="SUPFAM" id="SSF48179">
    <property type="entry name" value="6-phosphogluconate dehydrogenase C-terminal domain-like"/>
    <property type="match status" value="1"/>
</dbReference>
<dbReference type="SUPFAM" id="SSF51735">
    <property type="entry name" value="NAD(P)-binding Rossmann-fold domains"/>
    <property type="match status" value="1"/>
</dbReference>
<dbReference type="PROSITE" id="PS00957">
    <property type="entry name" value="NAD_G3PDH"/>
    <property type="match status" value="1"/>
</dbReference>